<organism>
    <name type="scientific">Tetraodon nigroviridis</name>
    <name type="common">Spotted green pufferfish</name>
    <name type="synonym">Chelonodon nigroviridis</name>
    <dbReference type="NCBI Taxonomy" id="99883"/>
    <lineage>
        <taxon>Eukaryota</taxon>
        <taxon>Metazoa</taxon>
        <taxon>Chordata</taxon>
        <taxon>Craniata</taxon>
        <taxon>Vertebrata</taxon>
        <taxon>Euteleostomi</taxon>
        <taxon>Actinopterygii</taxon>
        <taxon>Neopterygii</taxon>
        <taxon>Teleostei</taxon>
        <taxon>Neoteleostei</taxon>
        <taxon>Acanthomorphata</taxon>
        <taxon>Eupercaria</taxon>
        <taxon>Tetraodontiformes</taxon>
        <taxon>Tetradontoidea</taxon>
        <taxon>Tetraodontidae</taxon>
        <taxon>Tetraodon</taxon>
    </lineage>
</organism>
<accession>Q4JQH8</accession>
<evidence type="ECO:0000250" key="1"/>
<evidence type="ECO:0000255" key="2"/>
<evidence type="ECO:0000305" key="3"/>
<keyword id="KW-0249">Electron transport</keyword>
<keyword id="KW-0472">Membrane</keyword>
<keyword id="KW-0496">Mitochondrion</keyword>
<keyword id="KW-0520">NAD</keyword>
<keyword id="KW-1185">Reference proteome</keyword>
<keyword id="KW-0679">Respiratory chain</keyword>
<keyword id="KW-1278">Translocase</keyword>
<keyword id="KW-0812">Transmembrane</keyword>
<keyword id="KW-1133">Transmembrane helix</keyword>
<keyword id="KW-0813">Transport</keyword>
<keyword id="KW-0830">Ubiquinone</keyword>
<reference key="1">
    <citation type="journal article" date="2006" name="DNA Seq.">
        <title>The complete nucleotide sequence of the mitochondrial genome of Tetraodon nigroviridis.</title>
        <authorList>
            <person name="Yue G.H."/>
            <person name="Lo L.C."/>
            <person name="Zhu Z.Y."/>
            <person name="Lin G."/>
            <person name="Feng F."/>
        </authorList>
    </citation>
    <scope>NUCLEOTIDE SEQUENCE [LARGE SCALE GENOMIC DNA]</scope>
</reference>
<dbReference type="EC" id="7.1.1.2"/>
<dbReference type="EMBL" id="DQ019313">
    <property type="protein sequence ID" value="AAY26167.1"/>
    <property type="molecule type" value="Genomic_DNA"/>
</dbReference>
<dbReference type="SMR" id="Q4JQH8"/>
<dbReference type="FunCoup" id="Q4JQH8">
    <property type="interactions" value="12"/>
</dbReference>
<dbReference type="STRING" id="99883.ENSTNIP00000002268"/>
<dbReference type="Ensembl" id="ENSTNIT00000003518.1">
    <property type="protein sequence ID" value="ENSTNIP00000002268.1"/>
    <property type="gene ID" value="ENSTNIG00000001739.1"/>
</dbReference>
<dbReference type="GeneTree" id="ENSGT00730000111316"/>
<dbReference type="HOGENOM" id="CLU_007100_4_0_1"/>
<dbReference type="InParanoid" id="Q4JQH8"/>
<dbReference type="OMA" id="ITRWGNQ"/>
<dbReference type="TreeFam" id="TF343520"/>
<dbReference type="Proteomes" id="UP000007303">
    <property type="component" value="Mitochondrion"/>
</dbReference>
<dbReference type="GO" id="GO:0031966">
    <property type="term" value="C:mitochondrial membrane"/>
    <property type="evidence" value="ECO:0007669"/>
    <property type="project" value="UniProtKB-SubCell"/>
</dbReference>
<dbReference type="GO" id="GO:0008137">
    <property type="term" value="F:NADH dehydrogenase (ubiquinone) activity"/>
    <property type="evidence" value="ECO:0007669"/>
    <property type="project" value="UniProtKB-EC"/>
</dbReference>
<dbReference type="GO" id="GO:0048039">
    <property type="term" value="F:ubiquinone binding"/>
    <property type="evidence" value="ECO:0007669"/>
    <property type="project" value="TreeGrafter"/>
</dbReference>
<dbReference type="GO" id="GO:0042773">
    <property type="term" value="P:ATP synthesis coupled electron transport"/>
    <property type="evidence" value="ECO:0007669"/>
    <property type="project" value="InterPro"/>
</dbReference>
<dbReference type="GO" id="GO:0015990">
    <property type="term" value="P:electron transport coupled proton transport"/>
    <property type="evidence" value="ECO:0007669"/>
    <property type="project" value="TreeGrafter"/>
</dbReference>
<dbReference type="InterPro" id="IPR000260">
    <property type="entry name" value="NADH4_N"/>
</dbReference>
<dbReference type="InterPro" id="IPR010227">
    <property type="entry name" value="NADH_Q_OxRdtase_chainM/4"/>
</dbReference>
<dbReference type="InterPro" id="IPR003918">
    <property type="entry name" value="NADH_UbQ_OxRdtase"/>
</dbReference>
<dbReference type="InterPro" id="IPR001750">
    <property type="entry name" value="ND/Mrp_TM"/>
</dbReference>
<dbReference type="NCBIfam" id="TIGR01972">
    <property type="entry name" value="NDH_I_M"/>
    <property type="match status" value="1"/>
</dbReference>
<dbReference type="PANTHER" id="PTHR43507">
    <property type="entry name" value="NADH-UBIQUINONE OXIDOREDUCTASE CHAIN 4"/>
    <property type="match status" value="1"/>
</dbReference>
<dbReference type="PANTHER" id="PTHR43507:SF20">
    <property type="entry name" value="NADH-UBIQUINONE OXIDOREDUCTASE CHAIN 4"/>
    <property type="match status" value="1"/>
</dbReference>
<dbReference type="Pfam" id="PF01059">
    <property type="entry name" value="Oxidored_q5_N"/>
    <property type="match status" value="1"/>
</dbReference>
<dbReference type="Pfam" id="PF00361">
    <property type="entry name" value="Proton_antipo_M"/>
    <property type="match status" value="1"/>
</dbReference>
<dbReference type="PRINTS" id="PR01437">
    <property type="entry name" value="NUOXDRDTASE4"/>
</dbReference>
<feature type="chain" id="PRO_0000117994" description="NADH-ubiquinone oxidoreductase chain 4">
    <location>
        <begin position="1"/>
        <end position="460"/>
    </location>
</feature>
<feature type="transmembrane region" description="Helical" evidence="2">
    <location>
        <begin position="22"/>
        <end position="42"/>
    </location>
</feature>
<feature type="transmembrane region" description="Helical" evidence="2">
    <location>
        <begin position="61"/>
        <end position="81"/>
    </location>
</feature>
<feature type="transmembrane region" description="Helical" evidence="2">
    <location>
        <begin position="97"/>
        <end position="114"/>
    </location>
</feature>
<feature type="transmembrane region" description="Helical" evidence="2">
    <location>
        <begin position="118"/>
        <end position="140"/>
    </location>
</feature>
<feature type="transmembrane region" description="Helical" evidence="2">
    <location>
        <begin position="149"/>
        <end position="169"/>
    </location>
</feature>
<feature type="transmembrane region" description="Helical" evidence="2">
    <location>
        <begin position="196"/>
        <end position="216"/>
    </location>
</feature>
<feature type="transmembrane region" description="Helical" evidence="2">
    <location>
        <begin position="226"/>
        <end position="246"/>
    </location>
</feature>
<feature type="transmembrane region" description="Helical" evidence="2">
    <location>
        <begin position="259"/>
        <end position="279"/>
    </location>
</feature>
<feature type="transmembrane region" description="Helical" evidence="2">
    <location>
        <begin position="286"/>
        <end position="305"/>
    </location>
</feature>
<feature type="transmembrane region" description="Helical" evidence="2">
    <location>
        <begin position="309"/>
        <end position="331"/>
    </location>
</feature>
<feature type="transmembrane region" description="Helical" evidence="2">
    <location>
        <begin position="352"/>
        <end position="372"/>
    </location>
</feature>
<feature type="transmembrane region" description="Helical" evidence="2">
    <location>
        <begin position="395"/>
        <end position="415"/>
    </location>
</feature>
<feature type="transmembrane region" description="Helical" evidence="2">
    <location>
        <begin position="437"/>
        <end position="457"/>
    </location>
</feature>
<proteinExistence type="inferred from homology"/>
<protein>
    <recommendedName>
        <fullName>NADH-ubiquinone oxidoreductase chain 4</fullName>
        <ecNumber>7.1.1.2</ecNumber>
    </recommendedName>
    <alternativeName>
        <fullName>NADH dehydrogenase subunit 4</fullName>
    </alternativeName>
</protein>
<geneLocation type="mitochondrion"/>
<comment type="function">
    <text evidence="1">Core subunit of the mitochondrial membrane respiratory chain NADH dehydrogenase (Complex I) that is believed to belong to the minimal assembly required for catalysis. Complex I functions in the transfer of electrons from NADH to the respiratory chain. The immediate electron acceptor for the enzyme is believed to be ubiquinone (By similarity).</text>
</comment>
<comment type="catalytic activity">
    <reaction>
        <text>a ubiquinone + NADH + 5 H(+)(in) = a ubiquinol + NAD(+) + 4 H(+)(out)</text>
        <dbReference type="Rhea" id="RHEA:29091"/>
        <dbReference type="Rhea" id="RHEA-COMP:9565"/>
        <dbReference type="Rhea" id="RHEA-COMP:9566"/>
        <dbReference type="ChEBI" id="CHEBI:15378"/>
        <dbReference type="ChEBI" id="CHEBI:16389"/>
        <dbReference type="ChEBI" id="CHEBI:17976"/>
        <dbReference type="ChEBI" id="CHEBI:57540"/>
        <dbReference type="ChEBI" id="CHEBI:57945"/>
        <dbReference type="EC" id="7.1.1.2"/>
    </reaction>
</comment>
<comment type="subcellular location">
    <subcellularLocation>
        <location evidence="1">Mitochondrion membrane</location>
        <topology evidence="1">Multi-pass membrane protein</topology>
    </subcellularLocation>
</comment>
<comment type="similarity">
    <text evidence="3">Belongs to the complex I subunit 4 family.</text>
</comment>
<gene>
    <name type="primary">MT-ND4</name>
    <name type="synonym">MTND4</name>
    <name type="synonym">NADH4</name>
    <name type="synonym">ND4</name>
</gene>
<name>NU4M_TETNG</name>
<sequence length="460" mass="51289">MLKILIPTVMLIPTAWLAPTKWLWPTTLLHSLLIALASLSWLKNASETGWSSLNPYMATDPLSTPLLILSCWLLPLMILASQPNHTAHEPINRQRMYISLLTSLQFFLILAFSATEMIMFYVMFEVTLIPTLILITRWGNQTERLNAGTYFLFYTLAGSLPLLVALLLLQNSNGSLSLLTLLHSTPPQLSTYAAKIWWTGCILAFLVKMPLYGVHLWLPKAHVEAPIAGSMILAAVLLKLGGYGMMRILMTLEPLTKELSYPFIILALWGVIMTGSICMRQTDLKSLIAYSSVSHMGLVVGGILIQTPWGFTGALILMIAHGLTSSALFCLANTNYERTHSRTMLLARGLQMALPLMTAWWFIASLANLALPPLPNLMGELMIVTSLFNWSWWTIALTGLGMLITAGYSLYMFLMTQRGPLPSHIMALEPSHTREHLLIALHLLPLLLLILKPELIWGWS</sequence>